<gene>
    <name type="primary">APOE</name>
</gene>
<dbReference type="EMBL" id="PVLD010006399">
    <property type="status" value="NOT_ANNOTATED_CDS"/>
    <property type="molecule type" value="Genomic_DNA"/>
</dbReference>
<dbReference type="SMR" id="P0DUY6"/>
<dbReference type="GO" id="GO:0042627">
    <property type="term" value="C:chylomicron"/>
    <property type="evidence" value="ECO:0007669"/>
    <property type="project" value="UniProtKB-KW"/>
</dbReference>
<dbReference type="GO" id="GO:0070062">
    <property type="term" value="C:extracellular exosome"/>
    <property type="evidence" value="ECO:0000250"/>
    <property type="project" value="UniProtKB"/>
</dbReference>
<dbReference type="GO" id="GO:0034364">
    <property type="term" value="C:high-density lipoprotein particle"/>
    <property type="evidence" value="ECO:0007669"/>
    <property type="project" value="UniProtKB-KW"/>
</dbReference>
<dbReference type="GO" id="GO:0034362">
    <property type="term" value="C:low-density lipoprotein particle"/>
    <property type="evidence" value="ECO:0007669"/>
    <property type="project" value="TreeGrafter"/>
</dbReference>
<dbReference type="GO" id="GO:0097487">
    <property type="term" value="C:multivesicular body, internal vesicle"/>
    <property type="evidence" value="ECO:0000250"/>
    <property type="project" value="UniProtKB"/>
</dbReference>
<dbReference type="GO" id="GO:0034361">
    <property type="term" value="C:very-low-density lipoprotein particle"/>
    <property type="evidence" value="ECO:0007669"/>
    <property type="project" value="UniProtKB-KW"/>
</dbReference>
<dbReference type="GO" id="GO:0120020">
    <property type="term" value="F:cholesterol transfer activity"/>
    <property type="evidence" value="ECO:0007669"/>
    <property type="project" value="TreeGrafter"/>
</dbReference>
<dbReference type="GO" id="GO:0008201">
    <property type="term" value="F:heparin binding"/>
    <property type="evidence" value="ECO:0007669"/>
    <property type="project" value="UniProtKB-KW"/>
</dbReference>
<dbReference type="GO" id="GO:0060228">
    <property type="term" value="F:phosphatidylcholine-sterol O-acyltransferase activator activity"/>
    <property type="evidence" value="ECO:0007669"/>
    <property type="project" value="TreeGrafter"/>
</dbReference>
<dbReference type="GO" id="GO:0005543">
    <property type="term" value="F:phospholipid binding"/>
    <property type="evidence" value="ECO:0007669"/>
    <property type="project" value="TreeGrafter"/>
</dbReference>
<dbReference type="GO" id="GO:0055090">
    <property type="term" value="P:acylglycerol homeostasis"/>
    <property type="evidence" value="ECO:0007669"/>
    <property type="project" value="TreeGrafter"/>
</dbReference>
<dbReference type="GO" id="GO:0033344">
    <property type="term" value="P:cholesterol efflux"/>
    <property type="evidence" value="ECO:0007669"/>
    <property type="project" value="TreeGrafter"/>
</dbReference>
<dbReference type="GO" id="GO:0008203">
    <property type="term" value="P:cholesterol metabolic process"/>
    <property type="evidence" value="ECO:0007669"/>
    <property type="project" value="TreeGrafter"/>
</dbReference>
<dbReference type="GO" id="GO:0042157">
    <property type="term" value="P:lipoprotein metabolic process"/>
    <property type="evidence" value="ECO:0007669"/>
    <property type="project" value="InterPro"/>
</dbReference>
<dbReference type="GO" id="GO:0032438">
    <property type="term" value="P:melanosome organization"/>
    <property type="evidence" value="ECO:0000250"/>
    <property type="project" value="UniProtKB"/>
</dbReference>
<dbReference type="GO" id="GO:0033700">
    <property type="term" value="P:phospholipid efflux"/>
    <property type="evidence" value="ECO:0007669"/>
    <property type="project" value="TreeGrafter"/>
</dbReference>
<dbReference type="FunFam" id="1.20.120.20:FF:000002">
    <property type="entry name" value="Apolipoprotein E"/>
    <property type="match status" value="1"/>
</dbReference>
<dbReference type="FunFam" id="1.20.120.20:FF:000003">
    <property type="entry name" value="Apolipoprotein E"/>
    <property type="match status" value="1"/>
</dbReference>
<dbReference type="Gene3D" id="1.20.120.20">
    <property type="entry name" value="Apolipoprotein"/>
    <property type="match status" value="2"/>
</dbReference>
<dbReference type="InterPro" id="IPR000074">
    <property type="entry name" value="ApoA_E"/>
</dbReference>
<dbReference type="InterPro" id="IPR050163">
    <property type="entry name" value="Apolipoprotein_A1/A4/E"/>
</dbReference>
<dbReference type="PANTHER" id="PTHR18976">
    <property type="entry name" value="APOLIPOPROTEIN"/>
    <property type="match status" value="1"/>
</dbReference>
<dbReference type="PANTHER" id="PTHR18976:SF2">
    <property type="entry name" value="APOLIPOPROTEIN E"/>
    <property type="match status" value="1"/>
</dbReference>
<dbReference type="Pfam" id="PF01442">
    <property type="entry name" value="Apolipoprotein"/>
    <property type="match status" value="1"/>
</dbReference>
<dbReference type="SUPFAM" id="SSF58113">
    <property type="entry name" value="Apolipoprotein A-I"/>
    <property type="match status" value="1"/>
</dbReference>
<proteinExistence type="inferred from homology"/>
<feature type="signal peptide" evidence="3">
    <location>
        <begin position="1"/>
        <end position="18"/>
    </location>
</feature>
<feature type="chain" id="PRO_0000454010" description="Apolipoprotein E">
    <location>
        <begin position="19"/>
        <end position="300"/>
    </location>
</feature>
<feature type="repeat" description="1">
    <location>
        <begin position="75"/>
        <end position="95"/>
    </location>
</feature>
<feature type="repeat" description="2">
    <location>
        <begin position="96"/>
        <end position="117"/>
    </location>
</feature>
<feature type="repeat" description="3">
    <location>
        <begin position="118"/>
        <end position="139"/>
    </location>
</feature>
<feature type="repeat" description="4">
    <location>
        <begin position="140"/>
        <end position="161"/>
    </location>
</feature>
<feature type="repeat" description="5">
    <location>
        <begin position="162"/>
        <end position="183"/>
    </location>
</feature>
<feature type="repeat" description="6">
    <location>
        <begin position="184"/>
        <end position="205"/>
    </location>
</feature>
<feature type="repeat" description="7">
    <location>
        <begin position="206"/>
        <end position="224"/>
    </location>
</feature>
<feature type="repeat" description="8">
    <location>
        <begin position="225"/>
        <end position="243"/>
    </location>
</feature>
<feature type="region of interest" description="8 X 22 AA approximate tandem repeats">
    <location>
        <begin position="74"/>
        <end position="246"/>
    </location>
</feature>
<feature type="region of interest" description="LDL and other lipoprotein receptors binding" evidence="1">
    <location>
        <begin position="152"/>
        <end position="162"/>
    </location>
</feature>
<feature type="region of interest" description="Lipid-binding and lipoprotein association" evidence="1">
    <location>
        <begin position="204"/>
        <end position="274"/>
    </location>
</feature>
<feature type="region of interest" description="Specificity for association with VLDL" evidence="1">
    <location>
        <begin position="262"/>
        <end position="274"/>
    </location>
</feature>
<feature type="binding site" evidence="1">
    <location>
        <begin position="156"/>
        <end position="159"/>
    </location>
    <ligand>
        <name>heparin</name>
        <dbReference type="ChEBI" id="CHEBI:28304"/>
    </ligand>
</feature>
<feature type="binding site" evidence="1">
    <location>
        <begin position="220"/>
        <end position="227"/>
    </location>
    <ligand>
        <name>heparin</name>
        <dbReference type="ChEBI" id="CHEBI:28304"/>
    </ligand>
</feature>
<feature type="modified residue" description="Methionine sulfoxide" evidence="2">
    <location>
        <position position="137"/>
    </location>
</feature>
<feature type="modified residue" description="Phosphoserine" evidence="1">
    <location>
        <position position="141"/>
    </location>
</feature>
<protein>
    <recommendedName>
        <fullName>Apolipoprotein E</fullName>
        <shortName>Apo-E</shortName>
    </recommendedName>
</protein>
<evidence type="ECO:0000250" key="1">
    <source>
        <dbReference type="UniProtKB" id="P02649"/>
    </source>
</evidence>
<evidence type="ECO:0000250" key="2">
    <source>
        <dbReference type="UniProtKB" id="P08226"/>
    </source>
</evidence>
<evidence type="ECO:0000255" key="3"/>
<evidence type="ECO:0000305" key="4"/>
<keyword id="KW-0162">Chylomicron</keyword>
<keyword id="KW-0967">Endosome</keyword>
<keyword id="KW-0272">Extracellular matrix</keyword>
<keyword id="KW-0325">Glycoprotein</keyword>
<keyword id="KW-0345">HDL</keyword>
<keyword id="KW-0358">Heparin-binding</keyword>
<keyword id="KW-0445">Lipid transport</keyword>
<keyword id="KW-0446">Lipid-binding</keyword>
<keyword id="KW-0558">Oxidation</keyword>
<keyword id="KW-0597">Phosphoprotein</keyword>
<keyword id="KW-0677">Repeat</keyword>
<keyword id="KW-0964">Secreted</keyword>
<keyword id="KW-0732">Signal</keyword>
<keyword id="KW-0813">Transport</keyword>
<keyword id="KW-0850">VLDL</keyword>
<accession>P0DUY6</accession>
<reference key="1">
    <citation type="submission" date="2018-02" db="EMBL/GenBank/DDBJ databases">
        <title>The 200 mammals project: sequencing genomes by a novel cost-effective method, yielding a high resolution annotation of the human genome.</title>
        <authorList>
            <person name="Johnson J."/>
            <person name="Muren E."/>
            <person name="Swofford R."/>
            <person name="Turner-Maier J."/>
            <person name="Marinescu V."/>
            <person name="Genereux D."/>
            <person name="Birren B."/>
            <person name="Karlsson E.K."/>
            <person name="Lindblad-Toh K."/>
        </authorList>
    </citation>
    <scope>NUCLEOTIDE SEQUENCE [LARGE SCALE GENOMIC DNA]</scope>
</reference>
<reference key="2">
    <citation type="unpublished observations" date="2021-07">
        <authorList>
            <person name="Puppione D.L."/>
        </authorList>
    </citation>
    <scope>IDENTIFICATION</scope>
</reference>
<organism>
    <name type="scientific">Dinomys branickii</name>
    <name type="common">Pacarana</name>
    <dbReference type="NCBI Taxonomy" id="108858"/>
    <lineage>
        <taxon>Eukaryota</taxon>
        <taxon>Metazoa</taxon>
        <taxon>Chordata</taxon>
        <taxon>Craniata</taxon>
        <taxon>Vertebrata</taxon>
        <taxon>Euteleostomi</taxon>
        <taxon>Mammalia</taxon>
        <taxon>Eutheria</taxon>
        <taxon>Euarchontoglires</taxon>
        <taxon>Glires</taxon>
        <taxon>Rodentia</taxon>
        <taxon>Hystricomorpha</taxon>
        <taxon>Dinomyidae</taxon>
        <taxon>Dinomys</taxon>
    </lineage>
</organism>
<name>APOE_DINBR</name>
<sequence>MKVLWAVLVVTLLAGCQADVEPELEAQEPAVWQNGQPWELALGRFWDYLRWVQTLSDQVQEELLSSQVTQELTVLMEDTMKEVKAYKSELEQELAPMAEETKARLSKELKAAQARLGADMEEVRNRLSQYRGEVQSMLGHSAEELRARLATHLRKLRKRLLRDAEDLQKRLAVYKAGASEGAERSVSAIRERLGSLVEQGRLRTAALTSQPLQERAQAWGERLRGRLEEVGSKARDRLDEVREQMEEVRLKVEEQAEAFQARLKGWFEPMMEDIRRQWADLIEKMQAAVGTSTPAPTQKP</sequence>
<comment type="function">
    <text evidence="1">APOE is an apolipoprotein, a protein associating with lipid particles, that mainly functions in lipoprotein-mediated lipid transport between organs via the plasma and interstitial fluids. APOE is a core component of plasma lipoproteins and is involved in their production, conversion and clearance. Apolipoproteins are amphipathic molecules that interact both with lipids of the lipoprotein particle core and the aqueous environment of the plasma. As such, APOE associates with chylomicrons, chylomicron remnants, very low density lipoproteins (VLDL) and intermediate density lipoproteins (IDL) but shows a preferential binding to high-density lipoproteins (HDL). It also binds a wide range of cellular receptors including the LDL receptor/LDLR, the LDL receptor-related proteins LRP1, LRP2 and LRP8 and the very low-density lipoprotein receptor/VLDLR that mediate the cellular uptake of the APOE-containing lipoprotein particles. Finally, APOE also has a heparin-binding activity and binds heparan-sulfate proteoglycans on the surface of cells, a property that supports the capture and the receptor-mediated uptake of APOE-containing lipoproteins by cells. A main function of APOE is to mediate lipoprotein clearance through the uptake of chylomicrons, VLDLs, and HDLs by hepatocytes. APOE is also involved in the biosynthesis by the liver of VLDLs as well as their uptake by peripheral tissues ensuring the delivery of triglycerides and energy storage in muscle, heart and adipose tissues. By participating in the lipoprotein-mediated distribution of lipids among tissues, APOE plays a critical role in plasma and tissues lipid homeostasis. APOE is also involved in two steps of reverse cholesterol transport, the HDLs-mediated transport of cholesterol from peripheral tissues to the liver, and thereby plays an important role in cholesterol homeostasis. First, it is functionally associated with ABCA1 in the biogenesis of HDLs in tissues. Second, it is enriched in circulating HDLs and mediates their uptake by hepatocytes. APOE also plays an important role in lipid transport in the central nervous system, regulating neuron survival and sprouting.</text>
</comment>
<comment type="subunit">
    <text evidence="1">Homotetramer. May interact with ABCA1; functionally associated with ABCA1 in the biogenesis of HDLs. May interact with APP/A4 amyloid-beta peptide; the interaction is extremely stable in vitro but its physiological significance is unclear. May interact with MAPT. May interact with MAP2. In the cerebrospinal fluid, interacts with secreted SORL1. Interacts with PMEL; this allows the loading of PMEL luminal fragment on ILVs to induce fibril nucleation.</text>
</comment>
<comment type="subcellular location">
    <subcellularLocation>
        <location evidence="1">Secreted</location>
    </subcellularLocation>
    <subcellularLocation>
        <location evidence="1">Secreted</location>
        <location evidence="1">Extracellular space</location>
    </subcellularLocation>
    <subcellularLocation>
        <location evidence="1">Secreted</location>
        <location evidence="1">Extracellular space</location>
        <location evidence="1">Extracellular matrix</location>
    </subcellularLocation>
    <subcellularLocation>
        <location evidence="1">Extracellular vesicle</location>
    </subcellularLocation>
    <subcellularLocation>
        <location evidence="1">Endosome</location>
        <location evidence="1">Multivesicular body</location>
    </subcellularLocation>
    <text evidence="1">In the plasma, APOE is associated with chylomicrons, chylomicrons remnants, VLDL, LDL and HDL lipoproteins. Lipid poor oligomeric APOE is associated with the extracellular matrix in a calcium- and heparan-sulfate proteoglycans-dependent manner. Lipidation induces the release from the extracellular matrix. Colocalizes with CD63 and PMEL at exosomes and in intraluminal vesicles within multivesicular endosomes.</text>
</comment>
<comment type="PTM">
    <text evidence="1">APOE exists as multiple glycosylated and sialylated glycoforms within cells and in plasma. The extent of glycosylation and sialylation are tissue and context specific.</text>
</comment>
<comment type="PTM">
    <text evidence="1">Glycated in plasma VLDL.</text>
</comment>
<comment type="PTM">
    <text evidence="1">Phosphorylated by FAM20C in the extracellular medium.</text>
</comment>
<comment type="similarity">
    <text evidence="4">Belongs to the apolipoprotein A1/A4/E family.</text>
</comment>